<sequence>MALSQGTKKKVCYYYDGDVGNYYYGQGHPMKPHRIRMTHNLLLNYGLYRKMEIYRPHKASAEEMTKYHSDDYIKFLRSIRPDNMSEYSKQMQRFNVGEDCPVFDGLFEFCQLSTGGSVASAVKLNKQQTDISVNWSGGLHHAKKSEASGFCYVNDIVLAILELLKYHQRVVYIDIDIHHGDGVEEAFYTTDRVMSVSFHKYGEYFPGTGDLRDIGAGKGKYYAVNYPLRDGIDDESYEAIFKPVMTKVMEMFQPSAVVLQCGADSLSGDRLGCFNLTIKGHAKCVEFIKTFNLPMLMLGGGGYTIRNVARCWTYETAVALDSEIPNELPYNDYFEYFGPDFKLHISPSNMTNQNTNEYLEKIKQRLFENLRMLPHAPGVQMQAIPEDSVHDDSGEEDEEDPDKRISIRSSDKRIACDEEFSDSEDEGEGGRKNVANFKKVKRVKTEEEKEGEDKKDVKEEEKAKDEKTDSKRVKEETKSV</sequence>
<accession>O42227</accession>
<proteinExistence type="evidence at protein level"/>
<dbReference type="EC" id="3.5.1.98" evidence="3"/>
<dbReference type="EC" id="3.5.1.-" evidence="1"/>
<dbReference type="EMBL" id="AF020658">
    <property type="protein sequence ID" value="AAC60346.1"/>
    <property type="molecule type" value="mRNA"/>
</dbReference>
<dbReference type="SMR" id="O42227"/>
<dbReference type="IntAct" id="O42227">
    <property type="interactions" value="1"/>
</dbReference>
<dbReference type="AGR" id="Xenbase:XB-GENE-865283"/>
<dbReference type="Xenbase" id="XB-GENE-865283">
    <property type="gene designation" value="hdac1.S"/>
</dbReference>
<dbReference type="Proteomes" id="UP000186698">
    <property type="component" value="Unplaced"/>
</dbReference>
<dbReference type="GO" id="GO:0005737">
    <property type="term" value="C:cytoplasm"/>
    <property type="evidence" value="ECO:0007669"/>
    <property type="project" value="UniProtKB-SubCell"/>
</dbReference>
<dbReference type="GO" id="GO:0016581">
    <property type="term" value="C:NuRD complex"/>
    <property type="evidence" value="ECO:0000318"/>
    <property type="project" value="GO_Central"/>
</dbReference>
<dbReference type="GO" id="GO:0004407">
    <property type="term" value="F:histone deacetylase activity"/>
    <property type="evidence" value="ECO:0000250"/>
    <property type="project" value="UniProtKB"/>
</dbReference>
<dbReference type="GO" id="GO:0141221">
    <property type="term" value="F:histone deacetylase activity, hydrolytic mechanism"/>
    <property type="evidence" value="ECO:0007669"/>
    <property type="project" value="UniProtKB-EC"/>
</dbReference>
<dbReference type="GO" id="GO:0160009">
    <property type="term" value="F:histone decrotonylase activity"/>
    <property type="evidence" value="ECO:0000250"/>
    <property type="project" value="UniProtKB"/>
</dbReference>
<dbReference type="GO" id="GO:0033558">
    <property type="term" value="F:protein lysine deacetylase activity"/>
    <property type="evidence" value="ECO:0000250"/>
    <property type="project" value="UniProtKB"/>
</dbReference>
<dbReference type="GO" id="GO:0031507">
    <property type="term" value="P:heterochromatin formation"/>
    <property type="evidence" value="ECO:0000318"/>
    <property type="project" value="GO_Central"/>
</dbReference>
<dbReference type="CDD" id="cd10010">
    <property type="entry name" value="HDAC1"/>
    <property type="match status" value="1"/>
</dbReference>
<dbReference type="FunFam" id="3.40.800.20:FF:000003">
    <property type="entry name" value="Histone deacetylase"/>
    <property type="match status" value="1"/>
</dbReference>
<dbReference type="Gene3D" id="3.40.800.20">
    <property type="entry name" value="Histone deacetylase domain"/>
    <property type="match status" value="1"/>
</dbReference>
<dbReference type="InterPro" id="IPR050284">
    <property type="entry name" value="HDAC_PDAC"/>
</dbReference>
<dbReference type="InterPro" id="IPR000286">
    <property type="entry name" value="His_deacetylse"/>
</dbReference>
<dbReference type="InterPro" id="IPR003084">
    <property type="entry name" value="His_deacetylse_1"/>
</dbReference>
<dbReference type="InterPro" id="IPR023801">
    <property type="entry name" value="His_deacetylse_dom"/>
</dbReference>
<dbReference type="InterPro" id="IPR037138">
    <property type="entry name" value="His_deacetylse_dom_sf"/>
</dbReference>
<dbReference type="InterPro" id="IPR023696">
    <property type="entry name" value="Ureohydrolase_dom_sf"/>
</dbReference>
<dbReference type="PANTHER" id="PTHR10625:SF49">
    <property type="entry name" value="HISTONE DEACETYLASE 1"/>
    <property type="match status" value="1"/>
</dbReference>
<dbReference type="PANTHER" id="PTHR10625">
    <property type="entry name" value="HISTONE DEACETYLASE HDAC1-RELATED"/>
    <property type="match status" value="1"/>
</dbReference>
<dbReference type="Pfam" id="PF00850">
    <property type="entry name" value="Hist_deacetyl"/>
    <property type="match status" value="1"/>
</dbReference>
<dbReference type="PIRSF" id="PIRSF037913">
    <property type="entry name" value="His_deacetylse_1"/>
    <property type="match status" value="1"/>
</dbReference>
<dbReference type="PRINTS" id="PR01270">
    <property type="entry name" value="HDASUPER"/>
</dbReference>
<dbReference type="PRINTS" id="PR01271">
    <property type="entry name" value="HISDACETLASE"/>
</dbReference>
<dbReference type="SUPFAM" id="SSF52768">
    <property type="entry name" value="Arginase/deacetylase"/>
    <property type="match status" value="1"/>
</dbReference>
<reference key="1">
    <citation type="journal article" date="1998" name="EMBO J.">
        <title>Distinct requirements for chromatin assembly in transcriptional repression by thyroid hormone receptor and histone deacetylase.</title>
        <authorList>
            <person name="Wong J."/>
            <person name="Patterton D."/>
            <person name="Imhof A."/>
            <person name="Guschin D."/>
            <person name="Shi Y.-B."/>
            <person name="Wolffe A.P."/>
        </authorList>
    </citation>
    <scope>NUCLEOTIDE SEQUENCE [MRNA]</scope>
</reference>
<reference key="2">
    <citation type="journal article" date="1998" name="Curr. Biol.">
        <title>A multiple subunit Mi-2 histone deacetylase from Xenopus laevis cofractionates with an associated Snf2 superfamily ATPase.</title>
        <authorList>
            <person name="Wade P.A."/>
            <person name="Jones P.L."/>
            <person name="Vermaak D."/>
            <person name="Wolffe A.P."/>
        </authorList>
    </citation>
    <scope>IDENTIFICATION IN A COMPLEX WITH RBBP4 AND MI-2</scope>
</reference>
<reference key="3">
    <citation type="journal article" date="1999" name="Mol. Cell. Biol.">
        <title>Functional analysis of the SIN3-histone deacetylase RPD3-RbAp48-histone H4 connection in the Xenopus oocyte.</title>
        <authorList>
            <person name="Vermaak D."/>
            <person name="Wade P.A."/>
            <person name="Jones P.L."/>
            <person name="Shi Y.-B."/>
            <person name="Wolffe A.P."/>
        </authorList>
    </citation>
    <scope>FUNCTION</scope>
    <scope>CATALYTIC ACTIVITY</scope>
    <scope>SUBCELLULAR LOCATION</scope>
    <scope>INTERACTION WITH RBBP4</scope>
    <scope>MUTAGENESIS OF HIS-141</scope>
</reference>
<keyword id="KW-0156">Chromatin regulator</keyword>
<keyword id="KW-0963">Cytoplasm</keyword>
<keyword id="KW-0378">Hydrolase</keyword>
<keyword id="KW-0539">Nucleus</keyword>
<keyword id="KW-1185">Reference proteome</keyword>
<keyword id="KW-0678">Repressor</keyword>
<keyword id="KW-0804">Transcription</keyword>
<keyword id="KW-0805">Transcription regulation</keyword>
<comment type="function">
    <text evidence="1 3">Histone deacetylase that catalyzes the deacetylation of lysine residues on the N-terminal part of the core histones (H2A, H2B, H3 and H4) (PubMed:10454532). Histone deacetylation gives a tag for epigenetic repression and plays an important role in transcriptional regulation, cell cycle progression and developmental events (PubMed:10454532). Histone deacetylases act via the formation of large multiprotein complexes (By similarity). Also functions as a deacetylase for non-histone proteins. In addition to protein deacetylase activity, also has protein-lysine deacylase activity: acts as a protein decrotonylase by mediating decrotonylation ((2E)-butenoyl) of histones (By similarity).</text>
</comment>
<comment type="catalytic activity">
    <reaction evidence="3">
        <text>N(6)-acetyl-L-lysyl-[histone] + H2O = L-lysyl-[histone] + acetate</text>
        <dbReference type="Rhea" id="RHEA:58196"/>
        <dbReference type="Rhea" id="RHEA-COMP:9845"/>
        <dbReference type="Rhea" id="RHEA-COMP:11338"/>
        <dbReference type="ChEBI" id="CHEBI:15377"/>
        <dbReference type="ChEBI" id="CHEBI:29969"/>
        <dbReference type="ChEBI" id="CHEBI:30089"/>
        <dbReference type="ChEBI" id="CHEBI:61930"/>
        <dbReference type="EC" id="3.5.1.98"/>
    </reaction>
    <physiologicalReaction direction="left-to-right" evidence="3">
        <dbReference type="Rhea" id="RHEA:58197"/>
    </physiologicalReaction>
</comment>
<comment type="catalytic activity">
    <reaction evidence="1">
        <text>N(6)-acetyl-L-lysyl-[protein] + H2O = L-lysyl-[protein] + acetate</text>
        <dbReference type="Rhea" id="RHEA:58108"/>
        <dbReference type="Rhea" id="RHEA-COMP:9752"/>
        <dbReference type="Rhea" id="RHEA-COMP:10731"/>
        <dbReference type="ChEBI" id="CHEBI:15377"/>
        <dbReference type="ChEBI" id="CHEBI:29969"/>
        <dbReference type="ChEBI" id="CHEBI:30089"/>
        <dbReference type="ChEBI" id="CHEBI:61930"/>
    </reaction>
    <physiologicalReaction direction="left-to-right" evidence="1">
        <dbReference type="Rhea" id="RHEA:58109"/>
    </physiologicalReaction>
</comment>
<comment type="catalytic activity">
    <reaction evidence="1">
        <text>N(6)-(2E)-butenoyl-L-lysyl-[protein] + H2O = (2E)-2-butenoate + L-lysyl-[protein]</text>
        <dbReference type="Rhea" id="RHEA:69172"/>
        <dbReference type="Rhea" id="RHEA-COMP:9752"/>
        <dbReference type="Rhea" id="RHEA-COMP:13707"/>
        <dbReference type="ChEBI" id="CHEBI:15377"/>
        <dbReference type="ChEBI" id="CHEBI:29969"/>
        <dbReference type="ChEBI" id="CHEBI:35899"/>
        <dbReference type="ChEBI" id="CHEBI:137954"/>
    </reaction>
    <physiologicalReaction direction="left-to-right" evidence="1">
        <dbReference type="Rhea" id="RHEA:69173"/>
    </physiologicalReaction>
</comment>
<comment type="subunit">
    <text evidence="4">Found in a large complex with RBBP4 and MI-2.</text>
</comment>
<comment type="subcellular location">
    <subcellularLocation>
        <location evidence="3">Nucleus</location>
    </subcellularLocation>
    <subcellularLocation>
        <location evidence="3">Cytoplasm</location>
    </subcellularLocation>
</comment>
<comment type="similarity">
    <text evidence="5">Belongs to the histone deacetylase family. HD type 1 subfamily.</text>
</comment>
<name>HDA1B_XENLA</name>
<protein>
    <recommendedName>
        <fullName>Probable histone deacetylase 1-B</fullName>
        <shortName>HD1-B</shortName>
        <ecNumber evidence="3">3.5.1.98</ecNumber>
    </recommendedName>
    <alternativeName>
        <fullName>Protein deacetylase HDAC1-B</fullName>
        <ecNumber evidence="1">3.5.1.-</ecNumber>
    </alternativeName>
    <alternativeName>
        <fullName>Protein decrotonylase HDAC1-B</fullName>
        <ecNumber evidence="1">3.5.1.-</ecNumber>
    </alternativeName>
    <alternativeName>
        <fullName>RPD3 homolog</fullName>
    </alternativeName>
</protein>
<evidence type="ECO:0000250" key="1">
    <source>
        <dbReference type="UniProtKB" id="Q13547"/>
    </source>
</evidence>
<evidence type="ECO:0000256" key="2">
    <source>
        <dbReference type="SAM" id="MobiDB-lite"/>
    </source>
</evidence>
<evidence type="ECO:0000269" key="3">
    <source>
    </source>
</evidence>
<evidence type="ECO:0000269" key="4">
    <source>
    </source>
</evidence>
<evidence type="ECO:0000305" key="5"/>
<evidence type="ECO:0000305" key="6">
    <source>
    </source>
</evidence>
<feature type="chain" id="PRO_0000114692" description="Probable histone deacetylase 1-B">
    <location>
        <begin position="1"/>
        <end position="480"/>
    </location>
</feature>
<feature type="region of interest" description="Histone deacetylase">
    <location>
        <begin position="10"/>
        <end position="321"/>
    </location>
</feature>
<feature type="region of interest" description="Disordered" evidence="2">
    <location>
        <begin position="387"/>
        <end position="480"/>
    </location>
</feature>
<feature type="compositionally biased region" description="Basic and acidic residues" evidence="2">
    <location>
        <begin position="401"/>
        <end position="416"/>
    </location>
</feature>
<feature type="compositionally biased region" description="Acidic residues" evidence="2">
    <location>
        <begin position="417"/>
        <end position="427"/>
    </location>
</feature>
<feature type="compositionally biased region" description="Basic and acidic residues" evidence="2">
    <location>
        <begin position="443"/>
        <end position="480"/>
    </location>
</feature>
<feature type="active site" evidence="6">
    <location>
        <position position="141"/>
    </location>
</feature>
<feature type="mutagenesis site" description="Abolishes histone deacetylase activity." evidence="3">
    <original>H</original>
    <variation>A</variation>
    <location>
        <position position="141"/>
    </location>
</feature>
<organism>
    <name type="scientific">Xenopus laevis</name>
    <name type="common">African clawed frog</name>
    <dbReference type="NCBI Taxonomy" id="8355"/>
    <lineage>
        <taxon>Eukaryota</taxon>
        <taxon>Metazoa</taxon>
        <taxon>Chordata</taxon>
        <taxon>Craniata</taxon>
        <taxon>Vertebrata</taxon>
        <taxon>Euteleostomi</taxon>
        <taxon>Amphibia</taxon>
        <taxon>Batrachia</taxon>
        <taxon>Anura</taxon>
        <taxon>Pipoidea</taxon>
        <taxon>Pipidae</taxon>
        <taxon>Xenopodinae</taxon>
        <taxon>Xenopus</taxon>
        <taxon>Xenopus</taxon>
    </lineage>
</organism>
<gene>
    <name type="primary">hdac1-b</name>
</gene>